<gene>
    <name type="primary">Nts</name>
</gene>
<proteinExistence type="evidence at transcript level"/>
<sequence length="169" mass="19608">MRGMNLQLVCLTLLAFSSWSLCSDSEEDVRALEADLLTNMHTSKISKASPPSWKMTLLNVCSLINNVNSPAEEAGDMHDDDLVGKRKLPLVLDGFSLEAMLTIFQLQKICRSRAFQHWEIIQEDILDNVNDKNEKEEVIKRKIPYILKRQLYENKPRRPYILKRGSYYY</sequence>
<feature type="signal peptide" evidence="1">
    <location>
        <begin position="1"/>
        <end position="22"/>
    </location>
</feature>
<feature type="chain" id="PRO_0000019526" description="Large neuromedin N">
    <location>
        <begin position="23"/>
        <end position="147"/>
    </location>
</feature>
<feature type="peptide" id="PRO_0000019527" description="Neuromedin N">
    <location>
        <begin position="142"/>
        <end position="147"/>
    </location>
</feature>
<feature type="peptide" id="PRO_0000019528" description="Neurotensin">
    <location>
        <begin position="150"/>
        <end position="162"/>
    </location>
</feature>
<feature type="peptide" id="PRO_0000019529" description="Tail peptide" evidence="3">
    <location>
        <begin position="165"/>
        <end position="169"/>
    </location>
</feature>
<feature type="site" description="Cleavage; by MME" evidence="2">
    <location>
        <begin position="159"/>
        <end position="160"/>
    </location>
</feature>
<feature type="site" description="Cleavage; by ACE and MME" evidence="2">
    <location>
        <begin position="160"/>
        <end position="161"/>
    </location>
</feature>
<keyword id="KW-0165">Cleavage on pair of basic residues</keyword>
<keyword id="KW-0968">Cytoplasmic vesicle</keyword>
<keyword id="KW-1185">Reference proteome</keyword>
<keyword id="KW-0964">Secreted</keyword>
<keyword id="KW-0732">Signal</keyword>
<keyword id="KW-0838">Vasoactive</keyword>
<organism>
    <name type="scientific">Mus musculus</name>
    <name type="common">Mouse</name>
    <dbReference type="NCBI Taxonomy" id="10090"/>
    <lineage>
        <taxon>Eukaryota</taxon>
        <taxon>Metazoa</taxon>
        <taxon>Chordata</taxon>
        <taxon>Craniata</taxon>
        <taxon>Vertebrata</taxon>
        <taxon>Euteleostomi</taxon>
        <taxon>Mammalia</taxon>
        <taxon>Eutheria</taxon>
        <taxon>Euarchontoglires</taxon>
        <taxon>Glires</taxon>
        <taxon>Rodentia</taxon>
        <taxon>Myomorpha</taxon>
        <taxon>Muroidea</taxon>
        <taxon>Muridae</taxon>
        <taxon>Murinae</taxon>
        <taxon>Mus</taxon>
        <taxon>Mus</taxon>
    </lineage>
</organism>
<name>NEUT_MOUSE</name>
<reference key="1">
    <citation type="journal article" date="2001" name="Proc. Natl. Acad. Sci. U.S.A.">
        <title>Neurotensin-deficient mice show altered responses to antipsychotic drugs.</title>
        <authorList>
            <person name="Dobner P.R."/>
            <person name="Fadel J."/>
            <person name="Deitemeyer N."/>
            <person name="Carraway R.E."/>
            <person name="Deutch A.Y."/>
        </authorList>
    </citation>
    <scope>NUCLEOTIDE SEQUENCE [GENOMIC DNA]</scope>
    <source>
        <strain>129</strain>
    </source>
</reference>
<reference key="2">
    <citation type="submission" date="2000-09" db="EMBL/GenBank/DDBJ databases">
        <title>Mouse proneurotensin/proneuromedin N is induced in mast cell line after IgE cross-linking.</title>
        <authorList>
            <person name="Ahn H.-J."/>
            <person name="Cho J.-J."/>
        </authorList>
    </citation>
    <scope>NUCLEOTIDE SEQUENCE</scope>
</reference>
<reference key="3">
    <citation type="journal article" date="2005" name="Science">
        <title>The transcriptional landscape of the mammalian genome.</title>
        <authorList>
            <person name="Carninci P."/>
            <person name="Kasukawa T."/>
            <person name="Katayama S."/>
            <person name="Gough J."/>
            <person name="Frith M.C."/>
            <person name="Maeda N."/>
            <person name="Oyama R."/>
            <person name="Ravasi T."/>
            <person name="Lenhard B."/>
            <person name="Wells C."/>
            <person name="Kodzius R."/>
            <person name="Shimokawa K."/>
            <person name="Bajic V.B."/>
            <person name="Brenner S.E."/>
            <person name="Batalov S."/>
            <person name="Forrest A.R."/>
            <person name="Zavolan M."/>
            <person name="Davis M.J."/>
            <person name="Wilming L.G."/>
            <person name="Aidinis V."/>
            <person name="Allen J.E."/>
            <person name="Ambesi-Impiombato A."/>
            <person name="Apweiler R."/>
            <person name="Aturaliya R.N."/>
            <person name="Bailey T.L."/>
            <person name="Bansal M."/>
            <person name="Baxter L."/>
            <person name="Beisel K.W."/>
            <person name="Bersano T."/>
            <person name="Bono H."/>
            <person name="Chalk A.M."/>
            <person name="Chiu K.P."/>
            <person name="Choudhary V."/>
            <person name="Christoffels A."/>
            <person name="Clutterbuck D.R."/>
            <person name="Crowe M.L."/>
            <person name="Dalla E."/>
            <person name="Dalrymple B.P."/>
            <person name="de Bono B."/>
            <person name="Della Gatta G."/>
            <person name="di Bernardo D."/>
            <person name="Down T."/>
            <person name="Engstrom P."/>
            <person name="Fagiolini M."/>
            <person name="Faulkner G."/>
            <person name="Fletcher C.F."/>
            <person name="Fukushima T."/>
            <person name="Furuno M."/>
            <person name="Futaki S."/>
            <person name="Gariboldi M."/>
            <person name="Georgii-Hemming P."/>
            <person name="Gingeras T.R."/>
            <person name="Gojobori T."/>
            <person name="Green R.E."/>
            <person name="Gustincich S."/>
            <person name="Harbers M."/>
            <person name="Hayashi Y."/>
            <person name="Hensch T.K."/>
            <person name="Hirokawa N."/>
            <person name="Hill D."/>
            <person name="Huminiecki L."/>
            <person name="Iacono M."/>
            <person name="Ikeo K."/>
            <person name="Iwama A."/>
            <person name="Ishikawa T."/>
            <person name="Jakt M."/>
            <person name="Kanapin A."/>
            <person name="Katoh M."/>
            <person name="Kawasawa Y."/>
            <person name="Kelso J."/>
            <person name="Kitamura H."/>
            <person name="Kitano H."/>
            <person name="Kollias G."/>
            <person name="Krishnan S.P."/>
            <person name="Kruger A."/>
            <person name="Kummerfeld S.K."/>
            <person name="Kurochkin I.V."/>
            <person name="Lareau L.F."/>
            <person name="Lazarevic D."/>
            <person name="Lipovich L."/>
            <person name="Liu J."/>
            <person name="Liuni S."/>
            <person name="McWilliam S."/>
            <person name="Madan Babu M."/>
            <person name="Madera M."/>
            <person name="Marchionni L."/>
            <person name="Matsuda H."/>
            <person name="Matsuzawa S."/>
            <person name="Miki H."/>
            <person name="Mignone F."/>
            <person name="Miyake S."/>
            <person name="Morris K."/>
            <person name="Mottagui-Tabar S."/>
            <person name="Mulder N."/>
            <person name="Nakano N."/>
            <person name="Nakauchi H."/>
            <person name="Ng P."/>
            <person name="Nilsson R."/>
            <person name="Nishiguchi S."/>
            <person name="Nishikawa S."/>
            <person name="Nori F."/>
            <person name="Ohara O."/>
            <person name="Okazaki Y."/>
            <person name="Orlando V."/>
            <person name="Pang K.C."/>
            <person name="Pavan W.J."/>
            <person name="Pavesi G."/>
            <person name="Pesole G."/>
            <person name="Petrovsky N."/>
            <person name="Piazza S."/>
            <person name="Reed J."/>
            <person name="Reid J.F."/>
            <person name="Ring B.Z."/>
            <person name="Ringwald M."/>
            <person name="Rost B."/>
            <person name="Ruan Y."/>
            <person name="Salzberg S.L."/>
            <person name="Sandelin A."/>
            <person name="Schneider C."/>
            <person name="Schoenbach C."/>
            <person name="Sekiguchi K."/>
            <person name="Semple C.A."/>
            <person name="Seno S."/>
            <person name="Sessa L."/>
            <person name="Sheng Y."/>
            <person name="Shibata Y."/>
            <person name="Shimada H."/>
            <person name="Shimada K."/>
            <person name="Silva D."/>
            <person name="Sinclair B."/>
            <person name="Sperling S."/>
            <person name="Stupka E."/>
            <person name="Sugiura K."/>
            <person name="Sultana R."/>
            <person name="Takenaka Y."/>
            <person name="Taki K."/>
            <person name="Tammoja K."/>
            <person name="Tan S.L."/>
            <person name="Tang S."/>
            <person name="Taylor M.S."/>
            <person name="Tegner J."/>
            <person name="Teichmann S.A."/>
            <person name="Ueda H.R."/>
            <person name="van Nimwegen E."/>
            <person name="Verardo R."/>
            <person name="Wei C.L."/>
            <person name="Yagi K."/>
            <person name="Yamanishi H."/>
            <person name="Zabarovsky E."/>
            <person name="Zhu S."/>
            <person name="Zimmer A."/>
            <person name="Hide W."/>
            <person name="Bult C."/>
            <person name="Grimmond S.M."/>
            <person name="Teasdale R.D."/>
            <person name="Liu E.T."/>
            <person name="Brusic V."/>
            <person name="Quackenbush J."/>
            <person name="Wahlestedt C."/>
            <person name="Mattick J.S."/>
            <person name="Hume D.A."/>
            <person name="Kai C."/>
            <person name="Sasaki D."/>
            <person name="Tomaru Y."/>
            <person name="Fukuda S."/>
            <person name="Kanamori-Katayama M."/>
            <person name="Suzuki M."/>
            <person name="Aoki J."/>
            <person name="Arakawa T."/>
            <person name="Iida J."/>
            <person name="Imamura K."/>
            <person name="Itoh M."/>
            <person name="Kato T."/>
            <person name="Kawaji H."/>
            <person name="Kawagashira N."/>
            <person name="Kawashima T."/>
            <person name="Kojima M."/>
            <person name="Kondo S."/>
            <person name="Konno H."/>
            <person name="Nakano K."/>
            <person name="Ninomiya N."/>
            <person name="Nishio T."/>
            <person name="Okada M."/>
            <person name="Plessy C."/>
            <person name="Shibata K."/>
            <person name="Shiraki T."/>
            <person name="Suzuki S."/>
            <person name="Tagami M."/>
            <person name="Waki K."/>
            <person name="Watahiki A."/>
            <person name="Okamura-Oho Y."/>
            <person name="Suzuki H."/>
            <person name="Kawai J."/>
            <person name="Hayashizaki Y."/>
        </authorList>
    </citation>
    <scope>NUCLEOTIDE SEQUENCE [LARGE SCALE MRNA]</scope>
    <source>
        <strain>C57BL/6J</strain>
        <tissue>Intestine</tissue>
    </source>
</reference>
<reference key="4">
    <citation type="journal article" date="2004" name="Genome Res.">
        <title>The status, quality, and expansion of the NIH full-length cDNA project: the Mammalian Gene Collection (MGC).</title>
        <authorList>
            <consortium name="The MGC Project Team"/>
        </authorList>
    </citation>
    <scope>NUCLEOTIDE SEQUENCE [LARGE SCALE MRNA]</scope>
    <source>
        <strain>C57BL/6J</strain>
        <tissue>Brain</tissue>
    </source>
</reference>
<evidence type="ECO:0000250" key="1"/>
<evidence type="ECO:0000250" key="2">
    <source>
        <dbReference type="UniProtKB" id="P30990"/>
    </source>
</evidence>
<evidence type="ECO:0000255" key="3"/>
<evidence type="ECO:0000305" key="4"/>
<accession>Q9D3P9</accession>
<comment type="function">
    <text evidence="1">Neurotensin may play an endocrine or paracrine role in the regulation of fat metabolism. It causes contraction of smooth muscle (By similarity).</text>
</comment>
<comment type="subunit">
    <text evidence="2">Interacts with NTSR1. Interacts with SORT1. Interacts with SORL1.</text>
</comment>
<comment type="subcellular location">
    <subcellularLocation>
        <location evidence="1">Secreted</location>
    </subcellularLocation>
    <subcellularLocation>
        <location evidence="1">Cytoplasmic vesicle</location>
        <location evidence="1">Secretory vesicle</location>
    </subcellularLocation>
    <text evidence="1">Packaged within secretory vesicles.</text>
</comment>
<comment type="PTM">
    <molecule>Neurotensin</molecule>
    <text evidence="2">Neurotensin is cleaved and degraded by Angiotensin-converting enzyme (ACE) and neprilysin (MME).</text>
</comment>
<comment type="similarity">
    <text evidence="4">Belongs to the neurotensin family.</text>
</comment>
<protein>
    <recommendedName>
        <fullName>Neurotensin/neuromedin N</fullName>
    </recommendedName>
    <component>
        <recommendedName>
            <fullName>Large neuromedin N</fullName>
        </recommendedName>
        <alternativeName>
            <fullName>NmN-125</fullName>
        </alternativeName>
    </component>
    <component>
        <recommendedName>
            <fullName>Neuromedin N</fullName>
            <shortName>NN</shortName>
            <shortName>NmN</shortName>
        </recommendedName>
    </component>
    <component>
        <recommendedName>
            <fullName>Neurotensin</fullName>
            <shortName>NT</shortName>
        </recommendedName>
    </component>
    <component>
        <recommendedName>
            <fullName>Tail peptide</fullName>
        </recommendedName>
    </component>
</protein>
<dbReference type="EMBL" id="AF348489">
    <property type="protein sequence ID" value="AAK28626.1"/>
    <property type="molecule type" value="Genomic_DNA"/>
</dbReference>
<dbReference type="EMBL" id="AF304160">
    <property type="protein sequence ID" value="AAK15263.1"/>
    <property type="molecule type" value="mRNA"/>
</dbReference>
<dbReference type="EMBL" id="AK017212">
    <property type="protein sequence ID" value="BAB30636.1"/>
    <property type="molecule type" value="mRNA"/>
</dbReference>
<dbReference type="EMBL" id="BC043024">
    <property type="protein sequence ID" value="AAH43024.1"/>
    <property type="molecule type" value="mRNA"/>
</dbReference>
<dbReference type="CCDS" id="CCDS24154.1"/>
<dbReference type="RefSeq" id="NP_077755.1">
    <property type="nucleotide sequence ID" value="NM_024435.3"/>
</dbReference>
<dbReference type="FunCoup" id="Q9D3P9">
    <property type="interactions" value="438"/>
</dbReference>
<dbReference type="STRING" id="10090.ENSMUSP00000020040"/>
<dbReference type="PhosphoSitePlus" id="Q9D3P9"/>
<dbReference type="SwissPalm" id="Q9D3P9"/>
<dbReference type="PaxDb" id="10090-ENSMUSP00000020040"/>
<dbReference type="ProteomicsDB" id="287484"/>
<dbReference type="Antibodypedia" id="29877">
    <property type="antibodies" value="289 antibodies from 27 providers"/>
</dbReference>
<dbReference type="DNASU" id="67405"/>
<dbReference type="Ensembl" id="ENSMUST00000020040.5">
    <property type="protein sequence ID" value="ENSMUSP00000020040.4"/>
    <property type="gene ID" value="ENSMUSG00000019890.5"/>
</dbReference>
<dbReference type="GeneID" id="67405"/>
<dbReference type="KEGG" id="mmu:67405"/>
<dbReference type="UCSC" id="uc007gye.1">
    <property type="organism name" value="mouse"/>
</dbReference>
<dbReference type="AGR" id="MGI:1328351"/>
<dbReference type="CTD" id="4922"/>
<dbReference type="MGI" id="MGI:1328351">
    <property type="gene designation" value="Nts"/>
</dbReference>
<dbReference type="VEuPathDB" id="HostDB:ENSMUSG00000019890"/>
<dbReference type="eggNOG" id="ENOG502RYW6">
    <property type="taxonomic scope" value="Eukaryota"/>
</dbReference>
<dbReference type="GeneTree" id="ENSGT00640000091574"/>
<dbReference type="HOGENOM" id="CLU_133874_0_0_1"/>
<dbReference type="InParanoid" id="Q9D3P9"/>
<dbReference type="OMA" id="ISSWKMT"/>
<dbReference type="OrthoDB" id="9929102at2759"/>
<dbReference type="PhylomeDB" id="Q9D3P9"/>
<dbReference type="TreeFam" id="TF330765"/>
<dbReference type="Reactome" id="R-MMU-375276">
    <property type="pathway name" value="Peptide ligand-binding receptors"/>
</dbReference>
<dbReference type="Reactome" id="R-MMU-416476">
    <property type="pathway name" value="G alpha (q) signalling events"/>
</dbReference>
<dbReference type="BioGRID-ORCS" id="67405">
    <property type="hits" value="1 hit in 76 CRISPR screens"/>
</dbReference>
<dbReference type="ChiTaRS" id="Nts">
    <property type="organism name" value="mouse"/>
</dbReference>
<dbReference type="PRO" id="PR:Q9D3P9"/>
<dbReference type="Proteomes" id="UP000000589">
    <property type="component" value="Chromosome 10"/>
</dbReference>
<dbReference type="RNAct" id="Q9D3P9">
    <property type="molecule type" value="protein"/>
</dbReference>
<dbReference type="Bgee" id="ENSMUSG00000019890">
    <property type="expression patterns" value="Expressed in ileum and 134 other cell types or tissues"/>
</dbReference>
<dbReference type="GO" id="GO:0005576">
    <property type="term" value="C:extracellular region"/>
    <property type="evidence" value="ECO:0007669"/>
    <property type="project" value="UniProtKB-SubCell"/>
</dbReference>
<dbReference type="GO" id="GO:0030133">
    <property type="term" value="C:transport vesicle"/>
    <property type="evidence" value="ECO:0007669"/>
    <property type="project" value="UniProtKB-SubCell"/>
</dbReference>
<dbReference type="GO" id="GO:0005184">
    <property type="term" value="F:neuropeptide hormone activity"/>
    <property type="evidence" value="ECO:0000304"/>
    <property type="project" value="MGI"/>
</dbReference>
<dbReference type="GO" id="GO:0071855">
    <property type="term" value="F:neuropeptide receptor binding"/>
    <property type="evidence" value="ECO:0007669"/>
    <property type="project" value="Ensembl"/>
</dbReference>
<dbReference type="GO" id="GO:0097746">
    <property type="term" value="P:blood vessel diameter maintenance"/>
    <property type="evidence" value="ECO:0007669"/>
    <property type="project" value="UniProtKB-KW"/>
</dbReference>
<dbReference type="GO" id="GO:0010629">
    <property type="term" value="P:negative regulation of gene expression"/>
    <property type="evidence" value="ECO:0007669"/>
    <property type="project" value="Ensembl"/>
</dbReference>
<dbReference type="GO" id="GO:0007218">
    <property type="term" value="P:neuropeptide signaling pathway"/>
    <property type="evidence" value="ECO:0007669"/>
    <property type="project" value="Ensembl"/>
</dbReference>
<dbReference type="GO" id="GO:0010628">
    <property type="term" value="P:positive regulation of gene expression"/>
    <property type="evidence" value="ECO:0007669"/>
    <property type="project" value="Ensembl"/>
</dbReference>
<dbReference type="GO" id="GO:0051897">
    <property type="term" value="P:positive regulation of phosphatidylinositol 3-kinase/protein kinase B signal transduction"/>
    <property type="evidence" value="ECO:0007669"/>
    <property type="project" value="Ensembl"/>
</dbReference>
<dbReference type="InterPro" id="IPR008055">
    <property type="entry name" value="NeurotensiN"/>
</dbReference>
<dbReference type="PANTHER" id="PTHR15356">
    <property type="entry name" value="NEUROTENSIN/NEUROMEDIN N"/>
    <property type="match status" value="1"/>
</dbReference>
<dbReference type="PANTHER" id="PTHR15356:SF0">
    <property type="entry name" value="NEUROTENSIN_NEUROMEDIN N"/>
    <property type="match status" value="1"/>
</dbReference>
<dbReference type="Pfam" id="PF07421">
    <property type="entry name" value="Pro-NT_NN"/>
    <property type="match status" value="1"/>
</dbReference>
<dbReference type="PRINTS" id="PR01668">
    <property type="entry name" value="NEUROTENSIN"/>
</dbReference>